<name>RL10_BRUME</name>
<sequence length="172" mass="17945">MDRAEKREFVAWLNGAFKESGSVVVAHYTGLTVAQMSDLRSKMRDAGGSVKVAKNRLAKIALQGTESEGIADLFTGQTVVAYANDPITAPKVAVEFAKANDKLVILGGAMGATTLNADGVKSLASLPSLDELRAKLVGMIQTPAQRLAVLTSAPAGQIARVIGAHARKNEAA</sequence>
<accession>Q8YHP9</accession>
<comment type="function">
    <text evidence="1">Forms part of the ribosomal stalk, playing a central role in the interaction of the ribosome with GTP-bound translation factors.</text>
</comment>
<comment type="subunit">
    <text evidence="1">Part of the ribosomal stalk of the 50S ribosomal subunit. The N-terminus interacts with L11 and the large rRNA to form the base of the stalk. The C-terminus forms an elongated spine to which L12 dimers bind in a sequential fashion forming a multimeric L10(L12)X complex (By similarity).</text>
</comment>
<comment type="similarity">
    <text evidence="2">Belongs to the universal ribosomal protein uL10 family.</text>
</comment>
<comment type="sequence caution" evidence="2">
    <conflict type="erroneous initiation">
        <sequence resource="EMBL-CDS" id="AAL51928"/>
    </conflict>
</comment>
<reference key="1">
    <citation type="journal article" date="2002" name="Proc. Natl. Acad. Sci. U.S.A.">
        <title>The genome sequence of the facultative intracellular pathogen Brucella melitensis.</title>
        <authorList>
            <person name="DelVecchio V.G."/>
            <person name="Kapatral V."/>
            <person name="Redkar R.J."/>
            <person name="Patra G."/>
            <person name="Mujer C."/>
            <person name="Los T."/>
            <person name="Ivanova N."/>
            <person name="Anderson I."/>
            <person name="Bhattacharyya A."/>
            <person name="Lykidis A."/>
            <person name="Reznik G."/>
            <person name="Jablonski L."/>
            <person name="Larsen N."/>
            <person name="D'Souza M."/>
            <person name="Bernal A."/>
            <person name="Mazur M."/>
            <person name="Goltsman E."/>
            <person name="Selkov E."/>
            <person name="Elzer P.H."/>
            <person name="Hagius S."/>
            <person name="O'Callaghan D."/>
            <person name="Letesson J.-J."/>
            <person name="Haselkorn R."/>
            <person name="Kyrpides N.C."/>
            <person name="Overbeek R."/>
        </authorList>
    </citation>
    <scope>NUCLEOTIDE SEQUENCE [LARGE SCALE GENOMIC DNA]</scope>
    <source>
        <strain>ATCC 23456 / CCUG 17765 / NCTC 10094 / 16M</strain>
    </source>
</reference>
<feature type="chain" id="PRO_0000154600" description="Large ribosomal subunit protein uL10">
    <location>
        <begin position="1"/>
        <end position="172"/>
    </location>
</feature>
<proteinExistence type="inferred from homology"/>
<protein>
    <recommendedName>
        <fullName evidence="2">Large ribosomal subunit protein uL10</fullName>
    </recommendedName>
    <alternativeName>
        <fullName>50S ribosomal protein L10</fullName>
    </alternativeName>
</protein>
<gene>
    <name type="primary">rplJ</name>
    <name type="ordered locus">BMEI0747</name>
</gene>
<dbReference type="EMBL" id="AE008917">
    <property type="protein sequence ID" value="AAL51928.1"/>
    <property type="status" value="ALT_INIT"/>
    <property type="molecule type" value="Genomic_DNA"/>
</dbReference>
<dbReference type="PIR" id="AE3345">
    <property type="entry name" value="AE3345"/>
</dbReference>
<dbReference type="RefSeq" id="WP_002964372.1">
    <property type="nucleotide sequence ID" value="NZ_GG703780.1"/>
</dbReference>
<dbReference type="SMR" id="Q8YHP9"/>
<dbReference type="GeneID" id="93016430"/>
<dbReference type="KEGG" id="bme:BMEI0747"/>
<dbReference type="KEGG" id="bmel:DK63_675"/>
<dbReference type="PATRIC" id="fig|224914.52.peg.706"/>
<dbReference type="eggNOG" id="COG0244">
    <property type="taxonomic scope" value="Bacteria"/>
</dbReference>
<dbReference type="PhylomeDB" id="Q8YHP9"/>
<dbReference type="Proteomes" id="UP000000419">
    <property type="component" value="Chromosome I"/>
</dbReference>
<dbReference type="GO" id="GO:0015934">
    <property type="term" value="C:large ribosomal subunit"/>
    <property type="evidence" value="ECO:0007669"/>
    <property type="project" value="InterPro"/>
</dbReference>
<dbReference type="GO" id="GO:0070180">
    <property type="term" value="F:large ribosomal subunit rRNA binding"/>
    <property type="evidence" value="ECO:0007669"/>
    <property type="project" value="UniProtKB-UniRule"/>
</dbReference>
<dbReference type="GO" id="GO:0003735">
    <property type="term" value="F:structural constituent of ribosome"/>
    <property type="evidence" value="ECO:0007669"/>
    <property type="project" value="InterPro"/>
</dbReference>
<dbReference type="GO" id="GO:0006412">
    <property type="term" value="P:translation"/>
    <property type="evidence" value="ECO:0007669"/>
    <property type="project" value="UniProtKB-UniRule"/>
</dbReference>
<dbReference type="CDD" id="cd05797">
    <property type="entry name" value="Ribosomal_L10"/>
    <property type="match status" value="1"/>
</dbReference>
<dbReference type="Gene3D" id="3.30.70.1730">
    <property type="match status" value="1"/>
</dbReference>
<dbReference type="Gene3D" id="6.10.250.290">
    <property type="match status" value="1"/>
</dbReference>
<dbReference type="HAMAP" id="MF_00362">
    <property type="entry name" value="Ribosomal_uL10"/>
    <property type="match status" value="1"/>
</dbReference>
<dbReference type="InterPro" id="IPR001790">
    <property type="entry name" value="Ribosomal_uL10"/>
</dbReference>
<dbReference type="InterPro" id="IPR043141">
    <property type="entry name" value="Ribosomal_uL10-like_sf"/>
</dbReference>
<dbReference type="InterPro" id="IPR022973">
    <property type="entry name" value="Ribosomal_uL10_bac"/>
</dbReference>
<dbReference type="InterPro" id="IPR047865">
    <property type="entry name" value="Ribosomal_uL10_bac_type"/>
</dbReference>
<dbReference type="InterPro" id="IPR002363">
    <property type="entry name" value="Ribosomal_uL10_CS_bac"/>
</dbReference>
<dbReference type="NCBIfam" id="NF000955">
    <property type="entry name" value="PRK00099.1-1"/>
    <property type="match status" value="1"/>
</dbReference>
<dbReference type="PANTHER" id="PTHR11560">
    <property type="entry name" value="39S RIBOSOMAL PROTEIN L10, MITOCHONDRIAL"/>
    <property type="match status" value="1"/>
</dbReference>
<dbReference type="Pfam" id="PF00466">
    <property type="entry name" value="Ribosomal_L10"/>
    <property type="match status" value="1"/>
</dbReference>
<dbReference type="SUPFAM" id="SSF160369">
    <property type="entry name" value="Ribosomal protein L10-like"/>
    <property type="match status" value="1"/>
</dbReference>
<dbReference type="PROSITE" id="PS01109">
    <property type="entry name" value="RIBOSOMAL_L10"/>
    <property type="match status" value="1"/>
</dbReference>
<keyword id="KW-0687">Ribonucleoprotein</keyword>
<keyword id="KW-0689">Ribosomal protein</keyword>
<keyword id="KW-0694">RNA-binding</keyword>
<keyword id="KW-0699">rRNA-binding</keyword>
<evidence type="ECO:0000250" key="1"/>
<evidence type="ECO:0000305" key="2"/>
<organism>
    <name type="scientific">Brucella melitensis biotype 1 (strain ATCC 23456 / CCUG 17765 / NCTC 10094 / 16M)</name>
    <dbReference type="NCBI Taxonomy" id="224914"/>
    <lineage>
        <taxon>Bacteria</taxon>
        <taxon>Pseudomonadati</taxon>
        <taxon>Pseudomonadota</taxon>
        <taxon>Alphaproteobacteria</taxon>
        <taxon>Hyphomicrobiales</taxon>
        <taxon>Brucellaceae</taxon>
        <taxon>Brucella/Ochrobactrum group</taxon>
        <taxon>Brucella</taxon>
    </lineage>
</organism>